<feature type="chain" id="PRO_1000007677" description="DNA-directed RNA polymerase subunit alpha">
    <location>
        <begin position="1"/>
        <end position="325"/>
    </location>
</feature>
<feature type="region of interest" description="Alpha N-terminal domain (alpha-NTD)" evidence="1">
    <location>
        <begin position="1"/>
        <end position="231"/>
    </location>
</feature>
<feature type="region of interest" description="Alpha C-terminal domain (alpha-CTD)" evidence="1">
    <location>
        <begin position="246"/>
        <end position="325"/>
    </location>
</feature>
<comment type="function">
    <text evidence="1">DNA-dependent RNA polymerase catalyzes the transcription of DNA into RNA using the four ribonucleoside triphosphates as substrates.</text>
</comment>
<comment type="catalytic activity">
    <reaction evidence="1">
        <text>RNA(n) + a ribonucleoside 5'-triphosphate = RNA(n+1) + diphosphate</text>
        <dbReference type="Rhea" id="RHEA:21248"/>
        <dbReference type="Rhea" id="RHEA-COMP:14527"/>
        <dbReference type="Rhea" id="RHEA-COMP:17342"/>
        <dbReference type="ChEBI" id="CHEBI:33019"/>
        <dbReference type="ChEBI" id="CHEBI:61557"/>
        <dbReference type="ChEBI" id="CHEBI:140395"/>
        <dbReference type="EC" id="2.7.7.6"/>
    </reaction>
</comment>
<comment type="subunit">
    <text evidence="1">Homodimer. The RNAP catalytic core consists of 2 alpha, 1 beta, 1 beta' and 1 omega subunit. When a sigma factor is associated with the core the holoenzyme is formed, which can initiate transcription.</text>
</comment>
<comment type="domain">
    <text evidence="1">The N-terminal domain is essential for RNAP assembly and basal transcription, whereas the C-terminal domain is involved in interaction with transcriptional regulators and with upstream promoter elements.</text>
</comment>
<comment type="similarity">
    <text evidence="1">Belongs to the RNA polymerase alpha chain family.</text>
</comment>
<organism>
    <name type="scientific">Burkholderia mallei (strain NCTC 10229)</name>
    <dbReference type="NCBI Taxonomy" id="412022"/>
    <lineage>
        <taxon>Bacteria</taxon>
        <taxon>Pseudomonadati</taxon>
        <taxon>Pseudomonadota</taxon>
        <taxon>Betaproteobacteria</taxon>
        <taxon>Burkholderiales</taxon>
        <taxon>Burkholderiaceae</taxon>
        <taxon>Burkholderia</taxon>
        <taxon>pseudomallei group</taxon>
    </lineage>
</organism>
<dbReference type="EC" id="2.7.7.6" evidence="1"/>
<dbReference type="EMBL" id="CP000546">
    <property type="protein sequence ID" value="ABN02768.1"/>
    <property type="molecule type" value="Genomic_DNA"/>
</dbReference>
<dbReference type="RefSeq" id="WP_004197925.1">
    <property type="nucleotide sequence ID" value="NC_008836.1"/>
</dbReference>
<dbReference type="SMR" id="A2S7K2"/>
<dbReference type="GeneID" id="93061806"/>
<dbReference type="KEGG" id="bml:BMA10229_A1950"/>
<dbReference type="HOGENOM" id="CLU_053084_0_0_4"/>
<dbReference type="Proteomes" id="UP000002283">
    <property type="component" value="Chromosome I"/>
</dbReference>
<dbReference type="GO" id="GO:0005737">
    <property type="term" value="C:cytoplasm"/>
    <property type="evidence" value="ECO:0007669"/>
    <property type="project" value="UniProtKB-ARBA"/>
</dbReference>
<dbReference type="GO" id="GO:0000428">
    <property type="term" value="C:DNA-directed RNA polymerase complex"/>
    <property type="evidence" value="ECO:0007669"/>
    <property type="project" value="UniProtKB-KW"/>
</dbReference>
<dbReference type="GO" id="GO:0003677">
    <property type="term" value="F:DNA binding"/>
    <property type="evidence" value="ECO:0007669"/>
    <property type="project" value="UniProtKB-UniRule"/>
</dbReference>
<dbReference type="GO" id="GO:0003899">
    <property type="term" value="F:DNA-directed RNA polymerase activity"/>
    <property type="evidence" value="ECO:0007669"/>
    <property type="project" value="UniProtKB-UniRule"/>
</dbReference>
<dbReference type="GO" id="GO:0046983">
    <property type="term" value="F:protein dimerization activity"/>
    <property type="evidence" value="ECO:0007669"/>
    <property type="project" value="InterPro"/>
</dbReference>
<dbReference type="GO" id="GO:0006351">
    <property type="term" value="P:DNA-templated transcription"/>
    <property type="evidence" value="ECO:0007669"/>
    <property type="project" value="UniProtKB-UniRule"/>
</dbReference>
<dbReference type="CDD" id="cd06928">
    <property type="entry name" value="RNAP_alpha_NTD"/>
    <property type="match status" value="1"/>
</dbReference>
<dbReference type="FunFam" id="1.10.150.20:FF:000001">
    <property type="entry name" value="DNA-directed RNA polymerase subunit alpha"/>
    <property type="match status" value="1"/>
</dbReference>
<dbReference type="FunFam" id="2.170.120.12:FF:000001">
    <property type="entry name" value="DNA-directed RNA polymerase subunit alpha"/>
    <property type="match status" value="1"/>
</dbReference>
<dbReference type="Gene3D" id="1.10.150.20">
    <property type="entry name" value="5' to 3' exonuclease, C-terminal subdomain"/>
    <property type="match status" value="1"/>
</dbReference>
<dbReference type="Gene3D" id="2.170.120.12">
    <property type="entry name" value="DNA-directed RNA polymerase, insert domain"/>
    <property type="match status" value="1"/>
</dbReference>
<dbReference type="Gene3D" id="3.30.1360.10">
    <property type="entry name" value="RNA polymerase, RBP11-like subunit"/>
    <property type="match status" value="1"/>
</dbReference>
<dbReference type="HAMAP" id="MF_00059">
    <property type="entry name" value="RNApol_bact_RpoA"/>
    <property type="match status" value="1"/>
</dbReference>
<dbReference type="InterPro" id="IPR011262">
    <property type="entry name" value="DNA-dir_RNA_pol_insert"/>
</dbReference>
<dbReference type="InterPro" id="IPR011263">
    <property type="entry name" value="DNA-dir_RNA_pol_RpoA/D/Rpb3"/>
</dbReference>
<dbReference type="InterPro" id="IPR011773">
    <property type="entry name" value="DNA-dir_RpoA"/>
</dbReference>
<dbReference type="InterPro" id="IPR036603">
    <property type="entry name" value="RBP11-like"/>
</dbReference>
<dbReference type="InterPro" id="IPR011260">
    <property type="entry name" value="RNAP_asu_C"/>
</dbReference>
<dbReference type="InterPro" id="IPR036643">
    <property type="entry name" value="RNApol_insert_sf"/>
</dbReference>
<dbReference type="NCBIfam" id="NF003513">
    <property type="entry name" value="PRK05182.1-2"/>
    <property type="match status" value="1"/>
</dbReference>
<dbReference type="NCBIfam" id="NF003519">
    <property type="entry name" value="PRK05182.2-5"/>
    <property type="match status" value="1"/>
</dbReference>
<dbReference type="NCBIfam" id="TIGR02027">
    <property type="entry name" value="rpoA"/>
    <property type="match status" value="1"/>
</dbReference>
<dbReference type="Pfam" id="PF01000">
    <property type="entry name" value="RNA_pol_A_bac"/>
    <property type="match status" value="1"/>
</dbReference>
<dbReference type="Pfam" id="PF03118">
    <property type="entry name" value="RNA_pol_A_CTD"/>
    <property type="match status" value="1"/>
</dbReference>
<dbReference type="Pfam" id="PF01193">
    <property type="entry name" value="RNA_pol_L"/>
    <property type="match status" value="1"/>
</dbReference>
<dbReference type="SMART" id="SM00662">
    <property type="entry name" value="RPOLD"/>
    <property type="match status" value="1"/>
</dbReference>
<dbReference type="SUPFAM" id="SSF47789">
    <property type="entry name" value="C-terminal domain of RNA polymerase alpha subunit"/>
    <property type="match status" value="1"/>
</dbReference>
<dbReference type="SUPFAM" id="SSF56553">
    <property type="entry name" value="Insert subdomain of RNA polymerase alpha subunit"/>
    <property type="match status" value="1"/>
</dbReference>
<dbReference type="SUPFAM" id="SSF55257">
    <property type="entry name" value="RBP11-like subunits of RNA polymerase"/>
    <property type="match status" value="1"/>
</dbReference>
<evidence type="ECO:0000255" key="1">
    <source>
        <dbReference type="HAMAP-Rule" id="MF_00059"/>
    </source>
</evidence>
<accession>A2S7K2</accession>
<name>RPOA_BURM9</name>
<reference key="1">
    <citation type="journal article" date="2010" name="Genome Biol. Evol.">
        <title>Continuing evolution of Burkholderia mallei through genome reduction and large-scale rearrangements.</title>
        <authorList>
            <person name="Losada L."/>
            <person name="Ronning C.M."/>
            <person name="DeShazer D."/>
            <person name="Woods D."/>
            <person name="Fedorova N."/>
            <person name="Kim H.S."/>
            <person name="Shabalina S.A."/>
            <person name="Pearson T.R."/>
            <person name="Brinkac L."/>
            <person name="Tan P."/>
            <person name="Nandi T."/>
            <person name="Crabtree J."/>
            <person name="Badger J."/>
            <person name="Beckstrom-Sternberg S."/>
            <person name="Saqib M."/>
            <person name="Schutzer S.E."/>
            <person name="Keim P."/>
            <person name="Nierman W.C."/>
        </authorList>
    </citation>
    <scope>NUCLEOTIDE SEQUENCE [LARGE SCALE GENOMIC DNA]</scope>
    <source>
        <strain>NCTC 10229</strain>
    </source>
</reference>
<gene>
    <name evidence="1" type="primary">rpoA</name>
    <name type="ordered locus">BMA10229_A1950</name>
</gene>
<sequence length="325" mass="35685">MQTSLLKPKIIAVESLGENHAKVVMEPFERGYGHTLGNALRRVLLSSMVGYAPTEVTIAGVVHEYSTLDGVQEDVVNLLLNLKGVVFKLHNRDEVTVTLRKEGEGVVTAGDIELAHDCEVINPNHVIAHLSKGGKLDVQIKVEKGRGYVPGNVRRYGDETAKIIGRIVLDASFSPVRRVSYTVESARVEQRTDLDKLVMNIETSGVITPEEAIRQSARILVDQLSVFAALEGTETAAEAPSRAPQIDPILLRPVDDLELTVRSANCLKAENIYYIGDLIQRTENELLKTPNLGRKSLNEIKEVLASRGLTLGMKLENWPPAGLDK</sequence>
<protein>
    <recommendedName>
        <fullName evidence="1">DNA-directed RNA polymerase subunit alpha</fullName>
        <shortName evidence="1">RNAP subunit alpha</shortName>
        <ecNumber evidence="1">2.7.7.6</ecNumber>
    </recommendedName>
    <alternativeName>
        <fullName evidence="1">RNA polymerase subunit alpha</fullName>
    </alternativeName>
    <alternativeName>
        <fullName evidence="1">Transcriptase subunit alpha</fullName>
    </alternativeName>
</protein>
<proteinExistence type="inferred from homology"/>
<keyword id="KW-0240">DNA-directed RNA polymerase</keyword>
<keyword id="KW-0548">Nucleotidyltransferase</keyword>
<keyword id="KW-0804">Transcription</keyword>
<keyword id="KW-0808">Transferase</keyword>